<sequence length="129" mass="13666">MAKPGTRTRKKVKKTVVDGVAHIHASFNNTIVTISDRQGNVLSWATSGGSGFRGSRKSTPFAAQVAAERAGNAAAEYGLKNLDVEVKGPGPGRESAVRALNACGYKITNITDVTPIPHNGCRPPKKRRV</sequence>
<name>RS11_MARN8</name>
<protein>
    <recommendedName>
        <fullName evidence="1">Small ribosomal subunit protein uS11</fullName>
    </recommendedName>
    <alternativeName>
        <fullName evidence="2">30S ribosomal protein S11</fullName>
    </alternativeName>
</protein>
<comment type="function">
    <text evidence="1">Located on the platform of the 30S subunit, it bridges several disparate RNA helices of the 16S rRNA. Forms part of the Shine-Dalgarno cleft in the 70S ribosome.</text>
</comment>
<comment type="subunit">
    <text evidence="1">Part of the 30S ribosomal subunit. Interacts with proteins S7 and S18. Binds to IF-3.</text>
</comment>
<comment type="similarity">
    <text evidence="1">Belongs to the universal ribosomal protein uS11 family.</text>
</comment>
<keyword id="KW-0687">Ribonucleoprotein</keyword>
<keyword id="KW-0689">Ribosomal protein</keyword>
<keyword id="KW-0694">RNA-binding</keyword>
<keyword id="KW-0699">rRNA-binding</keyword>
<evidence type="ECO:0000255" key="1">
    <source>
        <dbReference type="HAMAP-Rule" id="MF_01310"/>
    </source>
</evidence>
<evidence type="ECO:0000305" key="2"/>
<accession>A1TYM0</accession>
<feature type="chain" id="PRO_0000294789" description="Small ribosomal subunit protein uS11">
    <location>
        <begin position="1"/>
        <end position="129"/>
    </location>
</feature>
<proteinExistence type="inferred from homology"/>
<dbReference type="EMBL" id="CP000514">
    <property type="protein sequence ID" value="ABM17839.1"/>
    <property type="molecule type" value="Genomic_DNA"/>
</dbReference>
<dbReference type="RefSeq" id="WP_007153992.1">
    <property type="nucleotide sequence ID" value="NC_008740.1"/>
</dbReference>
<dbReference type="SMR" id="A1TYM0"/>
<dbReference type="STRING" id="351348.Maqu_0742"/>
<dbReference type="GeneID" id="94722553"/>
<dbReference type="KEGG" id="maq:Maqu_0742"/>
<dbReference type="eggNOG" id="COG0100">
    <property type="taxonomic scope" value="Bacteria"/>
</dbReference>
<dbReference type="HOGENOM" id="CLU_072439_5_0_6"/>
<dbReference type="OrthoDB" id="9806415at2"/>
<dbReference type="Proteomes" id="UP000000998">
    <property type="component" value="Chromosome"/>
</dbReference>
<dbReference type="GO" id="GO:1990904">
    <property type="term" value="C:ribonucleoprotein complex"/>
    <property type="evidence" value="ECO:0007669"/>
    <property type="project" value="UniProtKB-KW"/>
</dbReference>
<dbReference type="GO" id="GO:0005840">
    <property type="term" value="C:ribosome"/>
    <property type="evidence" value="ECO:0007669"/>
    <property type="project" value="UniProtKB-KW"/>
</dbReference>
<dbReference type="GO" id="GO:0019843">
    <property type="term" value="F:rRNA binding"/>
    <property type="evidence" value="ECO:0007669"/>
    <property type="project" value="UniProtKB-UniRule"/>
</dbReference>
<dbReference type="GO" id="GO:0003735">
    <property type="term" value="F:structural constituent of ribosome"/>
    <property type="evidence" value="ECO:0007669"/>
    <property type="project" value="InterPro"/>
</dbReference>
<dbReference type="GO" id="GO:0006412">
    <property type="term" value="P:translation"/>
    <property type="evidence" value="ECO:0007669"/>
    <property type="project" value="UniProtKB-UniRule"/>
</dbReference>
<dbReference type="FunFam" id="3.30.420.80:FF:000001">
    <property type="entry name" value="30S ribosomal protein S11"/>
    <property type="match status" value="1"/>
</dbReference>
<dbReference type="Gene3D" id="3.30.420.80">
    <property type="entry name" value="Ribosomal protein S11"/>
    <property type="match status" value="1"/>
</dbReference>
<dbReference type="HAMAP" id="MF_01310">
    <property type="entry name" value="Ribosomal_uS11"/>
    <property type="match status" value="1"/>
</dbReference>
<dbReference type="InterPro" id="IPR001971">
    <property type="entry name" value="Ribosomal_uS11"/>
</dbReference>
<dbReference type="InterPro" id="IPR019981">
    <property type="entry name" value="Ribosomal_uS11_bac-type"/>
</dbReference>
<dbReference type="InterPro" id="IPR018102">
    <property type="entry name" value="Ribosomal_uS11_CS"/>
</dbReference>
<dbReference type="InterPro" id="IPR036967">
    <property type="entry name" value="Ribosomal_uS11_sf"/>
</dbReference>
<dbReference type="NCBIfam" id="NF003698">
    <property type="entry name" value="PRK05309.1"/>
    <property type="match status" value="1"/>
</dbReference>
<dbReference type="NCBIfam" id="TIGR03632">
    <property type="entry name" value="uS11_bact"/>
    <property type="match status" value="1"/>
</dbReference>
<dbReference type="PANTHER" id="PTHR11759">
    <property type="entry name" value="40S RIBOSOMAL PROTEIN S14/30S RIBOSOMAL PROTEIN S11"/>
    <property type="match status" value="1"/>
</dbReference>
<dbReference type="Pfam" id="PF00411">
    <property type="entry name" value="Ribosomal_S11"/>
    <property type="match status" value="1"/>
</dbReference>
<dbReference type="PIRSF" id="PIRSF002131">
    <property type="entry name" value="Ribosomal_S11"/>
    <property type="match status" value="1"/>
</dbReference>
<dbReference type="SUPFAM" id="SSF53137">
    <property type="entry name" value="Translational machinery components"/>
    <property type="match status" value="1"/>
</dbReference>
<dbReference type="PROSITE" id="PS00054">
    <property type="entry name" value="RIBOSOMAL_S11"/>
    <property type="match status" value="1"/>
</dbReference>
<organism>
    <name type="scientific">Marinobacter nauticus (strain ATCC 700491 / DSM 11845 / VT8)</name>
    <name type="common">Marinobacter aquaeolei</name>
    <dbReference type="NCBI Taxonomy" id="351348"/>
    <lineage>
        <taxon>Bacteria</taxon>
        <taxon>Pseudomonadati</taxon>
        <taxon>Pseudomonadota</taxon>
        <taxon>Gammaproteobacteria</taxon>
        <taxon>Pseudomonadales</taxon>
        <taxon>Marinobacteraceae</taxon>
        <taxon>Marinobacter</taxon>
    </lineage>
</organism>
<gene>
    <name evidence="1" type="primary">rpsK</name>
    <name type="ordered locus">Maqu_0742</name>
</gene>
<reference key="1">
    <citation type="journal article" date="2011" name="Appl. Environ. Microbiol.">
        <title>Genomic potential of Marinobacter aquaeolei, a biogeochemical 'opportunitroph'.</title>
        <authorList>
            <person name="Singer E."/>
            <person name="Webb E.A."/>
            <person name="Nelson W.C."/>
            <person name="Heidelberg J.F."/>
            <person name="Ivanova N."/>
            <person name="Pati A."/>
            <person name="Edwards K.J."/>
        </authorList>
    </citation>
    <scope>NUCLEOTIDE SEQUENCE [LARGE SCALE GENOMIC DNA]</scope>
    <source>
        <strain>ATCC 700491 / DSM 11845 / VT8</strain>
    </source>
</reference>